<protein>
    <recommendedName>
        <fullName>Nuclear transition protein 2</fullName>
        <shortName>TP-2</shortName>
        <shortName>TP2</shortName>
    </recommendedName>
</protein>
<evidence type="ECO:0000250" key="1">
    <source>
        <dbReference type="UniProtKB" id="P11378"/>
    </source>
</evidence>
<evidence type="ECO:0000256" key="2">
    <source>
        <dbReference type="SAM" id="MobiDB-lite"/>
    </source>
</evidence>
<evidence type="ECO:0000269" key="3">
    <source>
    </source>
</evidence>
<evidence type="ECO:0000269" key="4">
    <source>
    </source>
</evidence>
<evidence type="ECO:0000269" key="5">
    <source>
    </source>
</evidence>
<evidence type="ECO:0000269" key="6">
    <source>
    </source>
</evidence>
<evidence type="ECO:0000269" key="7">
    <source>
    </source>
</evidence>
<evidence type="ECO:0000269" key="8">
    <source>
    </source>
</evidence>
<evidence type="ECO:0000305" key="9"/>
<reference key="1">
    <citation type="journal article" date="1989" name="Nucleic Acids Res.">
        <title>The nucleotide sequence of rat transition protein 2 (TP2) cDNA.</title>
        <authorList>
            <person name="Luerssen H."/>
            <person name="Maier W.-M."/>
            <person name="Hoyer-Fender S."/>
            <person name="Engel W."/>
        </authorList>
    </citation>
    <scope>NUCLEOTIDE SEQUENCE [MRNA]</scope>
</reference>
<reference key="2">
    <citation type="journal article" date="1996" name="Protein Expr. Purif.">
        <title>Cloning of cDNA encoding rat spermatidal protein TP2 and expression in Escherichia coli.</title>
        <authorList>
            <person name="Meetei A.R."/>
            <person name="Rao M.R.S."/>
        </authorList>
    </citation>
    <scope>NUCLEOTIDE SEQUENCE [MRNA]</scope>
    <source>
        <strain>Wistar</strain>
        <tissue>Testis</tissue>
    </source>
</reference>
<reference key="3">
    <citation type="journal article" date="1996" name="Mol. Reprod. Dev.">
        <title>Sequence analysis of the conserved protamine gene cluster shows that it contains a fourth expressed gene.</title>
        <authorList>
            <person name="Schlueter G."/>
            <person name="Celik A.B."/>
            <person name="Obata R."/>
            <person name="Schlicker M."/>
            <person name="Hofferbert S."/>
            <person name="Schlung A."/>
            <person name="Adham I.M."/>
            <person name="Engel W."/>
        </authorList>
    </citation>
    <scope>NUCLEOTIDE SEQUENCE [GENOMIC DNA]</scope>
</reference>
<reference key="4">
    <citation type="journal article" date="2004" name="Genome Res.">
        <title>The status, quality, and expansion of the NIH full-length cDNA project: the Mammalian Gene Collection (MGC).</title>
        <authorList>
            <consortium name="The MGC Project Team"/>
        </authorList>
    </citation>
    <scope>NUCLEOTIDE SEQUENCE [LARGE SCALE MRNA]</scope>
    <source>
        <strain>Brown Norway</strain>
        <tissue>Testis</tissue>
    </source>
</reference>
<reference key="5">
    <citation type="journal article" date="1987" name="Biochem. Biophys. Res. Commun.">
        <title>Nuclear transition protein 2 (TP2) of mammalian spermatids has a very basic carboxyl terminal domain.</title>
        <authorList>
            <person name="Cole K.D."/>
            <person name="Kistler W.S."/>
        </authorList>
    </citation>
    <scope>PROTEIN SEQUENCE OF 89-114</scope>
</reference>
<reference key="6">
    <citation type="journal article" date="1991" name="Biochem. Biophys. Res. Commun.">
        <title>Mammalian spermatid specific protein, TP2, is a zinc metalloprotein with two finger motifs.</title>
        <authorList>
            <person name="Baskaran R."/>
            <person name="Rao M.R.S."/>
        </authorList>
    </citation>
    <scope>ZINC-BINDING</scope>
</reference>
<reference key="7">
    <citation type="journal article" date="1994" name="FEBS Lett.">
        <title>Characterization of the zinc-metalloprotein nature of rat spermatidal protein TP2.</title>
        <authorList>
            <person name="Kundu T.K."/>
            <person name="Rao M.R.S."/>
        </authorList>
    </citation>
    <scope>ZINC-BINDING</scope>
</reference>
<reference key="8">
    <citation type="journal article" date="2000" name="J. Biol. Chem.">
        <title>Identification of two novel zinc finger modules and nuclear localization signal in rat spermatidal protein TP2 by site-directed mutagenesis.</title>
        <authorList>
            <person name="Meetei A.R."/>
            <person name="Ullas K.S."/>
            <person name="Rao M.R.S."/>
        </authorList>
    </citation>
    <scope>MUTAGENESIS</scope>
    <scope>SUBCELLULAR LOCATION</scope>
</reference>
<reference key="9">
    <citation type="journal article" date="2002" name="Biochemistry">
        <title>Involvement of protein kinase A in the phosphorylation of spermatidal protein TP2 and its effect on DNA condensation.</title>
        <authorList>
            <person name="Meetei A.R."/>
            <person name="Ullas K.S."/>
            <person name="Vasupradha V."/>
            <person name="Rao M.R.S."/>
        </authorList>
    </citation>
    <scope>FUNCTION</scope>
    <scope>TISSUE SPECIFICITY</scope>
    <scope>PHOSPHORYLATION AT THR-101 AND SER-109</scope>
    <scope>MUTAGENESIS OF SER-68; SER-90; THR-101; SER-108 AND SER-109</scope>
</reference>
<reference key="10">
    <citation type="journal article" date="2003" name="J. Biol. Chem.">
        <title>Phosphorylation of rat spermatidal protein TP2 by sperm-specific protein kinase A and modulation of its transport into the haploid nucleus.</title>
        <authorList>
            <person name="Ullas K.S."/>
            <person name="Rao M.R.S."/>
        </authorList>
    </citation>
    <scope>SUBCELLULAR LOCATION</scope>
    <scope>TISSUE SPECIFICITY</scope>
    <scope>DEVELOPMENTAL STAGE</scope>
</reference>
<reference key="11">
    <citation type="journal article" date="2008" name="Mol. Cell. Biol.">
        <title>Involvement of importin-4 in the transport of transition protein 2 into the spermatid nucleus.</title>
        <authorList>
            <person name="Pradeepa M.M."/>
            <person name="Manjunatha S."/>
            <person name="Sathish V."/>
            <person name="Agrawal S."/>
            <person name="Rao M.R."/>
        </authorList>
    </citation>
    <scope>SUBCELLULAR LOCATION</scope>
</reference>
<keyword id="KW-0158">Chromosome</keyword>
<keyword id="KW-0217">Developmental protein</keyword>
<keyword id="KW-0221">Differentiation</keyword>
<keyword id="KW-0903">Direct protein sequencing</keyword>
<keyword id="KW-0238">DNA-binding</keyword>
<keyword id="KW-0479">Metal-binding</keyword>
<keyword id="KW-0544">Nucleosome core</keyword>
<keyword id="KW-0539">Nucleus</keyword>
<keyword id="KW-0597">Phosphoprotein</keyword>
<keyword id="KW-1185">Reference proteome</keyword>
<keyword id="KW-0744">Spermatogenesis</keyword>
<keyword id="KW-0862">Zinc</keyword>
<proteinExistence type="evidence at protein level"/>
<accession>P11101</accession>
<accession>Q64390</accession>
<accession>Q64561</accession>
<accession>Q6AYX7</accession>
<dbReference type="EMBL" id="X14776">
    <property type="protein sequence ID" value="CAA32882.1"/>
    <property type="molecule type" value="mRNA"/>
</dbReference>
<dbReference type="EMBL" id="U52958">
    <property type="protein sequence ID" value="AAB02693.1"/>
    <property type="molecule type" value="mRNA"/>
</dbReference>
<dbReference type="EMBL" id="Z46939">
    <property type="protein sequence ID" value="CAA87064.1"/>
    <property type="molecule type" value="Genomic_DNA"/>
</dbReference>
<dbReference type="EMBL" id="BC078849">
    <property type="protein sequence ID" value="AAH78849.1"/>
    <property type="molecule type" value="mRNA"/>
</dbReference>
<dbReference type="PIR" id="S04094">
    <property type="entry name" value="S04094"/>
</dbReference>
<dbReference type="PIR" id="S57667">
    <property type="entry name" value="S57667"/>
</dbReference>
<dbReference type="RefSeq" id="NP_058753.2">
    <property type="nucleotide sequence ID" value="NM_017057.2"/>
</dbReference>
<dbReference type="BioGRID" id="246958">
    <property type="interactions" value="3"/>
</dbReference>
<dbReference type="FunCoup" id="P11101">
    <property type="interactions" value="3"/>
</dbReference>
<dbReference type="STRING" id="10116.ENSRNOP00000003455"/>
<dbReference type="iPTMnet" id="P11101"/>
<dbReference type="PhosphoSitePlus" id="P11101"/>
<dbReference type="PaxDb" id="10116-ENSRNOP00000003455"/>
<dbReference type="GeneID" id="24840"/>
<dbReference type="KEGG" id="rno:24840"/>
<dbReference type="UCSC" id="RGD:3885">
    <property type="organism name" value="rat"/>
</dbReference>
<dbReference type="AGR" id="RGD:3885"/>
<dbReference type="CTD" id="7142"/>
<dbReference type="RGD" id="3885">
    <property type="gene designation" value="Tnp2"/>
</dbReference>
<dbReference type="eggNOG" id="KOG4566">
    <property type="taxonomic scope" value="Eukaryota"/>
</dbReference>
<dbReference type="InParanoid" id="P11101"/>
<dbReference type="PRO" id="PR:P11101"/>
<dbReference type="Proteomes" id="UP000002494">
    <property type="component" value="Unplaced"/>
</dbReference>
<dbReference type="GO" id="GO:0001673">
    <property type="term" value="C:male germ cell nucleus"/>
    <property type="evidence" value="ECO:0000266"/>
    <property type="project" value="RGD"/>
</dbReference>
<dbReference type="GO" id="GO:0005730">
    <property type="term" value="C:nucleolus"/>
    <property type="evidence" value="ECO:0007669"/>
    <property type="project" value="UniProtKB-SubCell"/>
</dbReference>
<dbReference type="GO" id="GO:0000786">
    <property type="term" value="C:nucleosome"/>
    <property type="evidence" value="ECO:0000250"/>
    <property type="project" value="UniProtKB"/>
</dbReference>
<dbReference type="GO" id="GO:0005634">
    <property type="term" value="C:nucleus"/>
    <property type="evidence" value="ECO:0000314"/>
    <property type="project" value="UniProtKB"/>
</dbReference>
<dbReference type="GO" id="GO:0003677">
    <property type="term" value="F:DNA binding"/>
    <property type="evidence" value="ECO:0007669"/>
    <property type="project" value="UniProtKB-KW"/>
</dbReference>
<dbReference type="GO" id="GO:0008270">
    <property type="term" value="F:zinc ion binding"/>
    <property type="evidence" value="ECO:0000314"/>
    <property type="project" value="RGD"/>
</dbReference>
<dbReference type="GO" id="GO:0007340">
    <property type="term" value="P:acrosome reaction"/>
    <property type="evidence" value="ECO:0000266"/>
    <property type="project" value="RGD"/>
</dbReference>
<dbReference type="GO" id="GO:0007339">
    <property type="term" value="P:binding of sperm to zona pellucida"/>
    <property type="evidence" value="ECO:0000266"/>
    <property type="project" value="RGD"/>
</dbReference>
<dbReference type="GO" id="GO:0030317">
    <property type="term" value="P:flagellated sperm motility"/>
    <property type="evidence" value="ECO:0000266"/>
    <property type="project" value="RGD"/>
</dbReference>
<dbReference type="GO" id="GO:0007341">
    <property type="term" value="P:penetration of zona pellucida"/>
    <property type="evidence" value="ECO:0000266"/>
    <property type="project" value="RGD"/>
</dbReference>
<dbReference type="GO" id="GO:0010954">
    <property type="term" value="P:positive regulation of protein processing"/>
    <property type="evidence" value="ECO:0000250"/>
    <property type="project" value="UniProtKB"/>
</dbReference>
<dbReference type="GO" id="GO:0035092">
    <property type="term" value="P:sperm DNA condensation"/>
    <property type="evidence" value="ECO:0000250"/>
    <property type="project" value="UniProtKB"/>
</dbReference>
<dbReference type="GO" id="GO:0007283">
    <property type="term" value="P:spermatogenesis"/>
    <property type="evidence" value="ECO:0000266"/>
    <property type="project" value="RGD"/>
</dbReference>
<dbReference type="InterPro" id="IPR000678">
    <property type="entry name" value="TP2"/>
</dbReference>
<dbReference type="PANTHER" id="PTHR17488">
    <property type="entry name" value="NUCLEAR TRANSITION PROTEIN 2"/>
    <property type="match status" value="1"/>
</dbReference>
<dbReference type="PANTHER" id="PTHR17488:SF0">
    <property type="entry name" value="NUCLEAR TRANSITION PROTEIN 2"/>
    <property type="match status" value="1"/>
</dbReference>
<dbReference type="Pfam" id="PF01254">
    <property type="entry name" value="TP2"/>
    <property type="match status" value="2"/>
</dbReference>
<dbReference type="PROSITE" id="PS00970">
    <property type="entry name" value="TP2_1"/>
    <property type="match status" value="1"/>
</dbReference>
<dbReference type="PROSITE" id="PS00971">
    <property type="entry name" value="TP2_2"/>
    <property type="match status" value="1"/>
</dbReference>
<comment type="function">
    <text evidence="1 4">Plays a key role in the replacement of histones to protamine in the elongating spermatids of mammals (PubMed:11772016). In condensing spermatids, loaded onto the nucleosomes, where it promotes the recruitment and processing of protamines, which are responsible for histone eviction (By similarity).</text>
</comment>
<comment type="subcellular location">
    <subcellularLocation>
        <location evidence="3 5 6">Nucleus</location>
    </subcellularLocation>
    <subcellularLocation>
        <location evidence="3 5">Nucleus</location>
        <location evidence="3 5">Nucleolus</location>
    </subcellularLocation>
    <subcellularLocation>
        <location evidence="5">Chromosome</location>
    </subcellularLocation>
    <text evidence="1 5 6">Loaded onto the nucleosomes of condensing spermatids (By similarity). Nuclear import is mediated by IPO4 (PubMed:17682055). Nucleolar localization requires the protein to be phosphorylated (PubMed:14514679).</text>
</comment>
<comment type="tissue specificity">
    <text evidence="4 5">Testis.</text>
</comment>
<comment type="developmental stage">
    <text evidence="5">Expressed during stages 12-15 of spermiogenesis.</text>
</comment>
<comment type="similarity">
    <text evidence="9">Belongs to the nuclear transition protein 2 family.</text>
</comment>
<organism>
    <name type="scientific">Rattus norvegicus</name>
    <name type="common">Rat</name>
    <dbReference type="NCBI Taxonomy" id="10116"/>
    <lineage>
        <taxon>Eukaryota</taxon>
        <taxon>Metazoa</taxon>
        <taxon>Chordata</taxon>
        <taxon>Craniata</taxon>
        <taxon>Vertebrata</taxon>
        <taxon>Euteleostomi</taxon>
        <taxon>Mammalia</taxon>
        <taxon>Eutheria</taxon>
        <taxon>Euarchontoglires</taxon>
        <taxon>Glires</taxon>
        <taxon>Rodentia</taxon>
        <taxon>Myomorpha</taxon>
        <taxon>Muroidea</taxon>
        <taxon>Muridae</taxon>
        <taxon>Murinae</taxon>
        <taxon>Rattus</taxon>
    </lineage>
</organism>
<gene>
    <name type="primary">Tnp2</name>
</gene>
<feature type="chain" id="PRO_0000191433" description="Nuclear transition protein 2">
    <location>
        <begin position="1"/>
        <end position="114"/>
    </location>
</feature>
<feature type="region of interest" description="Disordered" evidence="2">
    <location>
        <begin position="1"/>
        <end position="114"/>
    </location>
</feature>
<feature type="short sequence motif" description="Nuclear localization signal" evidence="3 6">
    <location>
        <begin position="87"/>
        <end position="95"/>
    </location>
</feature>
<feature type="compositionally biased region" description="Low complexity" evidence="2">
    <location>
        <begin position="16"/>
        <end position="25"/>
    </location>
</feature>
<feature type="compositionally biased region" description="Basic residues" evidence="2">
    <location>
        <begin position="90"/>
        <end position="114"/>
    </location>
</feature>
<feature type="binding site" evidence="7 8">
    <location>
        <position position="12"/>
    </location>
    <ligand>
        <name>Zn(2+)</name>
        <dbReference type="ChEBI" id="CHEBI:29105"/>
    </ligand>
</feature>
<feature type="binding site" evidence="7 8">
    <location>
        <position position="14"/>
    </location>
    <ligand>
        <name>Zn(2+)</name>
        <dbReference type="ChEBI" id="CHEBI:29105"/>
    </ligand>
</feature>
<feature type="binding site" evidence="7 8">
    <location>
        <position position="16"/>
    </location>
    <ligand>
        <name>Zn(2+)</name>
        <dbReference type="ChEBI" id="CHEBI:29105"/>
    </ligand>
</feature>
<feature type="binding site" evidence="7 8">
    <location>
        <position position="24"/>
    </location>
    <ligand>
        <name>Zn(2+)</name>
        <dbReference type="ChEBI" id="CHEBI:29105"/>
    </ligand>
</feature>
<feature type="binding site" evidence="7 8">
    <location>
        <position position="29"/>
    </location>
    <ligand>
        <name>Zn(2+)</name>
        <dbReference type="ChEBI" id="CHEBI:29105"/>
    </ligand>
</feature>
<feature type="binding site" evidence="7 8">
    <location>
        <position position="31"/>
    </location>
    <ligand>
        <name>Zn(2+)</name>
        <dbReference type="ChEBI" id="CHEBI:29105"/>
    </ligand>
</feature>
<feature type="binding site" evidence="7 8">
    <location>
        <position position="35"/>
    </location>
    <ligand>
        <name>Zn(2+)</name>
        <dbReference type="ChEBI" id="CHEBI:29105"/>
    </ligand>
</feature>
<feature type="binding site" evidence="7 8">
    <location>
        <position position="38"/>
    </location>
    <ligand>
        <name>Zn(2+)</name>
        <dbReference type="ChEBI" id="CHEBI:29105"/>
    </ligand>
</feature>
<feature type="modified residue" description="Phosphothreonine; by PKA" evidence="4">
    <location>
        <position position="101"/>
    </location>
</feature>
<feature type="modified residue" description="Phosphoserine; by PKA" evidence="4">
    <location>
        <position position="109"/>
    </location>
</feature>
<feature type="mutagenesis site" description="50% loss of zinc binding; when associated with Q-14; Q-16 and Q-24." evidence="3">
    <original>H</original>
    <variation>Q</variation>
    <location>
        <position position="12"/>
    </location>
</feature>
<feature type="mutagenesis site" description="50% loss of zinc binding; when associated with Q-12; Q-16 and Q-24." evidence="3">
    <original>H</original>
    <variation>Q</variation>
    <location>
        <position position="14"/>
    </location>
</feature>
<feature type="mutagenesis site" description="50% loss of zinc binding; when associated with Q-12; Q-14 and Q-24." evidence="3">
    <original>H</original>
    <variation>Q</variation>
    <location>
        <position position="16"/>
    </location>
</feature>
<feature type="mutagenesis site" description="50% loss of zinc binding; when associated with Q-12; Q-14 and Q-16." evidence="3">
    <original>H</original>
    <variation>Q</variation>
    <location>
        <position position="24"/>
    </location>
</feature>
<feature type="mutagenesis site" description="50% loss of zinc binding and loss of nucleolar localization; when associated with A-31; A-35 and A-38." evidence="3">
    <original>C</original>
    <variation>A</variation>
    <location>
        <position position="29"/>
    </location>
</feature>
<feature type="mutagenesis site" description="50% loss of zinc binding and loss of nucleolar localization; when associated with A-29; A-35 and A-38." evidence="3">
    <original>C</original>
    <variation>A</variation>
    <location>
        <position position="31"/>
    </location>
</feature>
<feature type="mutagenesis site" description="50% loss of zinc binding and loss of nucleolar localization; when associated with A-29; A-31 and A-38." evidence="3">
    <original>C</original>
    <variation>A</variation>
    <location>
        <position position="35"/>
    </location>
</feature>
<feature type="mutagenesis site" description="50% loss of zinc binding and loss of nucleolar localization; when associated with A-29; A-31 and A-35." evidence="3">
    <original>C</original>
    <variation>A</variation>
    <location>
        <position position="38"/>
    </location>
</feature>
<feature type="mutagenesis site" description="No effect on phosphorylation." evidence="4">
    <original>S</original>
    <variation>A</variation>
    <location>
        <position position="68"/>
    </location>
</feature>
<feature type="mutagenesis site" description="No effect on phosphorylation." evidence="4">
    <original>S</original>
    <variation>A</variation>
    <location>
        <position position="90"/>
    </location>
</feature>
<feature type="mutagenesis site" description="Slight decrease in phosphorylation." evidence="4">
    <original>T</original>
    <variation>A</variation>
    <location>
        <position position="101"/>
    </location>
</feature>
<feature type="mutagenesis site" description="No effect on phosphorylation." evidence="4">
    <original>S</original>
    <variation>A</variation>
    <location>
        <position position="108"/>
    </location>
</feature>
<feature type="mutagenesis site" description="Large decrease in phosphorylation." evidence="4">
    <original>S</original>
    <variation>A</variation>
    <location>
        <position position="109"/>
    </location>
</feature>
<feature type="sequence conflict" description="In Ref. 1; CAA32882." evidence="9" ref="1">
    <original>MDTKMQSL</original>
    <variation>MGGHTRRGRA</variation>
    <location>
        <begin position="1"/>
        <end position="8"/>
    </location>
</feature>
<feature type="sequence conflict" description="In Ref. 4; AAH78849." evidence="9" ref="4">
    <original>P</original>
    <variation>S</variation>
    <location>
        <position position="52"/>
    </location>
</feature>
<feature type="sequence conflict" description="In Ref. 3; CAA87064." evidence="9" ref="3">
    <original>S</original>
    <variation>SV</variation>
    <location>
        <position position="109"/>
    </location>
</feature>
<sequence length="114" mass="12848">MDTKMQSLPTTHPHPHSSSRPQSHTNNQCACSHHCRSCSQAGHPSSSSSPSPGPPTKHPKTPMHSRYSPSRPSHRGSCPKNRKTLEGKVSKRKAVRRRKRTHRAKRRSSGRRYK</sequence>
<name>STP2_RAT</name>